<sequence length="346" mass="37007">MKTKRWFVDVTDELSTNDPQIAQAAALLRENEVVAFPTETVYGLGANAKNTDAVKKIYEAKGRPSDNPLIVHIADISQLEDLTGPAPEKAKTLMKRFWPGALTLILPCKPDALSPRVTAGLETVAIRMPDHPLALALIRESGLPIAAPSANLSGKPSPTKAEHVAHDLDGRIAGIVDGGPTGIGVESTVLSCADDIPVLLRPGGITKEQIEAVIGPIHVDKGLSDQNEKPISPGMKYTHYAPTAPLAICEGSPERIQHLIQEYQQGGRRVGVLTTEEKAGVYSADYVKSCGRRAQLETVAAGLYDALRSFDENKVDFIIAESFPDTGVGLAIMNRLMKAAGGRVIR</sequence>
<organism>
    <name type="scientific">Bacillus subtilis (strain 168)</name>
    <dbReference type="NCBI Taxonomy" id="224308"/>
    <lineage>
        <taxon>Bacteria</taxon>
        <taxon>Bacillati</taxon>
        <taxon>Bacillota</taxon>
        <taxon>Bacilli</taxon>
        <taxon>Bacillales</taxon>
        <taxon>Bacillaceae</taxon>
        <taxon>Bacillus</taxon>
    </lineage>
</organism>
<accession>P39153</accession>
<dbReference type="EC" id="2.7.7.87"/>
<dbReference type="EMBL" id="Z38002">
    <property type="protein sequence ID" value="CAA86105.1"/>
    <property type="molecule type" value="Genomic_DNA"/>
</dbReference>
<dbReference type="EMBL" id="AL009126">
    <property type="protein sequence ID" value="CAB15712.1"/>
    <property type="molecule type" value="Genomic_DNA"/>
</dbReference>
<dbReference type="PIR" id="I40476">
    <property type="entry name" value="I40476"/>
</dbReference>
<dbReference type="RefSeq" id="WP_003227659.1">
    <property type="nucleotide sequence ID" value="NZ_OZ025638.1"/>
</dbReference>
<dbReference type="SMR" id="P39153"/>
<dbReference type="FunCoup" id="P39153">
    <property type="interactions" value="600"/>
</dbReference>
<dbReference type="STRING" id="224308.BSU36950"/>
<dbReference type="PaxDb" id="224308-BSU36950"/>
<dbReference type="EnsemblBacteria" id="CAB15712">
    <property type="protein sequence ID" value="CAB15712"/>
    <property type="gene ID" value="BSU_36950"/>
</dbReference>
<dbReference type="GeneID" id="937023"/>
<dbReference type="KEGG" id="bsu:BSU36950"/>
<dbReference type="PATRIC" id="fig|224308.179.peg.4002"/>
<dbReference type="eggNOG" id="COG0009">
    <property type="taxonomic scope" value="Bacteria"/>
</dbReference>
<dbReference type="InParanoid" id="P39153"/>
<dbReference type="OrthoDB" id="9814580at2"/>
<dbReference type="PhylomeDB" id="P39153"/>
<dbReference type="BioCyc" id="BSUB:BSU36950-MONOMER"/>
<dbReference type="BRENDA" id="2.7.7.87">
    <property type="organism ID" value="658"/>
</dbReference>
<dbReference type="Proteomes" id="UP000001570">
    <property type="component" value="Chromosome"/>
</dbReference>
<dbReference type="GO" id="GO:0005737">
    <property type="term" value="C:cytoplasm"/>
    <property type="evidence" value="ECO:0000318"/>
    <property type="project" value="GO_Central"/>
</dbReference>
<dbReference type="GO" id="GO:0005524">
    <property type="term" value="F:ATP binding"/>
    <property type="evidence" value="ECO:0000314"/>
    <property type="project" value="UniProtKB"/>
</dbReference>
<dbReference type="GO" id="GO:0003725">
    <property type="term" value="F:double-stranded RNA binding"/>
    <property type="evidence" value="ECO:0007669"/>
    <property type="project" value="InterPro"/>
</dbReference>
<dbReference type="GO" id="GO:0061710">
    <property type="term" value="F:L-threonylcarbamoyladenylate synthase"/>
    <property type="evidence" value="ECO:0007669"/>
    <property type="project" value="UniProtKB-EC"/>
</dbReference>
<dbReference type="GO" id="GO:0016779">
    <property type="term" value="F:nucleotidyltransferase activity"/>
    <property type="evidence" value="ECO:0000314"/>
    <property type="project" value="UniProtKB"/>
</dbReference>
<dbReference type="GO" id="GO:0000049">
    <property type="term" value="F:tRNA binding"/>
    <property type="evidence" value="ECO:0000318"/>
    <property type="project" value="GO_Central"/>
</dbReference>
<dbReference type="GO" id="GO:0006450">
    <property type="term" value="P:regulation of translational fidelity"/>
    <property type="evidence" value="ECO:0000318"/>
    <property type="project" value="GO_Central"/>
</dbReference>
<dbReference type="GO" id="GO:0002949">
    <property type="term" value="P:tRNA threonylcarbamoyladenosine modification"/>
    <property type="evidence" value="ECO:0000314"/>
    <property type="project" value="UniProtKB"/>
</dbReference>
<dbReference type="FunFam" id="3.40.50.11030:FF:000001">
    <property type="entry name" value="Threonylcarbamoyl-AMP synthase"/>
    <property type="match status" value="1"/>
</dbReference>
<dbReference type="FunFam" id="3.90.870.10:FF:000008">
    <property type="entry name" value="Threonylcarbamoyl-AMP synthase"/>
    <property type="match status" value="1"/>
</dbReference>
<dbReference type="Gene3D" id="3.90.870.10">
    <property type="entry name" value="DHBP synthase"/>
    <property type="match status" value="1"/>
</dbReference>
<dbReference type="Gene3D" id="3.40.50.11030">
    <property type="entry name" value="Threonylcarbamoyl-AMP synthase, C-terminal domain"/>
    <property type="match status" value="1"/>
</dbReference>
<dbReference type="InterPro" id="IPR017945">
    <property type="entry name" value="DHBP_synth_RibB-like_a/b_dom"/>
</dbReference>
<dbReference type="InterPro" id="IPR006070">
    <property type="entry name" value="Sua5-like_dom"/>
</dbReference>
<dbReference type="InterPro" id="IPR038385">
    <property type="entry name" value="Sua5/YwlC_C"/>
</dbReference>
<dbReference type="InterPro" id="IPR005145">
    <property type="entry name" value="Sua5_C"/>
</dbReference>
<dbReference type="InterPro" id="IPR010923">
    <property type="entry name" value="T(6)A37_SUA5"/>
</dbReference>
<dbReference type="InterPro" id="IPR050156">
    <property type="entry name" value="TC-AMP_synthase_SUA5"/>
</dbReference>
<dbReference type="NCBIfam" id="TIGR00057">
    <property type="entry name" value="L-threonylcarbamoyladenylate synthase"/>
    <property type="match status" value="1"/>
</dbReference>
<dbReference type="PANTHER" id="PTHR17490">
    <property type="entry name" value="SUA5"/>
    <property type="match status" value="1"/>
</dbReference>
<dbReference type="PANTHER" id="PTHR17490:SF16">
    <property type="entry name" value="THREONYLCARBAMOYL-AMP SYNTHASE"/>
    <property type="match status" value="1"/>
</dbReference>
<dbReference type="Pfam" id="PF03481">
    <property type="entry name" value="Sua5_C"/>
    <property type="match status" value="1"/>
</dbReference>
<dbReference type="Pfam" id="PF01300">
    <property type="entry name" value="Sua5_yciO_yrdC"/>
    <property type="match status" value="1"/>
</dbReference>
<dbReference type="PIRSF" id="PIRSF004930">
    <property type="entry name" value="Tln_factor_SUA5"/>
    <property type="match status" value="1"/>
</dbReference>
<dbReference type="SUPFAM" id="SSF55821">
    <property type="entry name" value="YrdC/RibB"/>
    <property type="match status" value="1"/>
</dbReference>
<dbReference type="PROSITE" id="PS51163">
    <property type="entry name" value="YRDC"/>
    <property type="match status" value="1"/>
</dbReference>
<proteinExistence type="evidence at protein level"/>
<evidence type="ECO:0000250" key="1"/>
<evidence type="ECO:0000255" key="2">
    <source>
        <dbReference type="PROSITE-ProRule" id="PRU00518"/>
    </source>
</evidence>
<evidence type="ECO:0000269" key="3">
    <source>
    </source>
</evidence>
<evidence type="ECO:0000305" key="4"/>
<evidence type="ECO:0000305" key="5">
    <source>
    </source>
</evidence>
<keyword id="KW-0067">ATP-binding</keyword>
<keyword id="KW-0963">Cytoplasm</keyword>
<keyword id="KW-0547">Nucleotide-binding</keyword>
<keyword id="KW-0548">Nucleotidyltransferase</keyword>
<keyword id="KW-1185">Reference proteome</keyword>
<keyword id="KW-0808">Transferase</keyword>
<keyword id="KW-0819">tRNA processing</keyword>
<name>SUA5_BACSU</name>
<reference key="1">
    <citation type="submission" date="1994-10" db="EMBL/GenBank/DDBJ databases">
        <authorList>
            <person name="Glaser P."/>
            <person name="Danchin A."/>
        </authorList>
    </citation>
    <scope>NUCLEOTIDE SEQUENCE [GENOMIC DNA]</scope>
    <source>
        <strain>168</strain>
    </source>
</reference>
<reference key="2">
    <citation type="journal article" date="1997" name="Nature">
        <title>The complete genome sequence of the Gram-positive bacterium Bacillus subtilis.</title>
        <authorList>
            <person name="Kunst F."/>
            <person name="Ogasawara N."/>
            <person name="Moszer I."/>
            <person name="Albertini A.M."/>
            <person name="Alloni G."/>
            <person name="Azevedo V."/>
            <person name="Bertero M.G."/>
            <person name="Bessieres P."/>
            <person name="Bolotin A."/>
            <person name="Borchert S."/>
            <person name="Borriss R."/>
            <person name="Boursier L."/>
            <person name="Brans A."/>
            <person name="Braun M."/>
            <person name="Brignell S.C."/>
            <person name="Bron S."/>
            <person name="Brouillet S."/>
            <person name="Bruschi C.V."/>
            <person name="Caldwell B."/>
            <person name="Capuano V."/>
            <person name="Carter N.M."/>
            <person name="Choi S.-K."/>
            <person name="Codani J.-J."/>
            <person name="Connerton I.F."/>
            <person name="Cummings N.J."/>
            <person name="Daniel R.A."/>
            <person name="Denizot F."/>
            <person name="Devine K.M."/>
            <person name="Duesterhoeft A."/>
            <person name="Ehrlich S.D."/>
            <person name="Emmerson P.T."/>
            <person name="Entian K.-D."/>
            <person name="Errington J."/>
            <person name="Fabret C."/>
            <person name="Ferrari E."/>
            <person name="Foulger D."/>
            <person name="Fritz C."/>
            <person name="Fujita M."/>
            <person name="Fujita Y."/>
            <person name="Fuma S."/>
            <person name="Galizzi A."/>
            <person name="Galleron N."/>
            <person name="Ghim S.-Y."/>
            <person name="Glaser P."/>
            <person name="Goffeau A."/>
            <person name="Golightly E.J."/>
            <person name="Grandi G."/>
            <person name="Guiseppi G."/>
            <person name="Guy B.J."/>
            <person name="Haga K."/>
            <person name="Haiech J."/>
            <person name="Harwood C.R."/>
            <person name="Henaut A."/>
            <person name="Hilbert H."/>
            <person name="Holsappel S."/>
            <person name="Hosono S."/>
            <person name="Hullo M.-F."/>
            <person name="Itaya M."/>
            <person name="Jones L.-M."/>
            <person name="Joris B."/>
            <person name="Karamata D."/>
            <person name="Kasahara Y."/>
            <person name="Klaerr-Blanchard M."/>
            <person name="Klein C."/>
            <person name="Kobayashi Y."/>
            <person name="Koetter P."/>
            <person name="Koningstein G."/>
            <person name="Krogh S."/>
            <person name="Kumano M."/>
            <person name="Kurita K."/>
            <person name="Lapidus A."/>
            <person name="Lardinois S."/>
            <person name="Lauber J."/>
            <person name="Lazarevic V."/>
            <person name="Lee S.-M."/>
            <person name="Levine A."/>
            <person name="Liu H."/>
            <person name="Masuda S."/>
            <person name="Mauel C."/>
            <person name="Medigue C."/>
            <person name="Medina N."/>
            <person name="Mellado R.P."/>
            <person name="Mizuno M."/>
            <person name="Moestl D."/>
            <person name="Nakai S."/>
            <person name="Noback M."/>
            <person name="Noone D."/>
            <person name="O'Reilly M."/>
            <person name="Ogawa K."/>
            <person name="Ogiwara A."/>
            <person name="Oudega B."/>
            <person name="Park S.-H."/>
            <person name="Parro V."/>
            <person name="Pohl T.M."/>
            <person name="Portetelle D."/>
            <person name="Porwollik S."/>
            <person name="Prescott A.M."/>
            <person name="Presecan E."/>
            <person name="Pujic P."/>
            <person name="Purnelle B."/>
            <person name="Rapoport G."/>
            <person name="Rey M."/>
            <person name="Reynolds S."/>
            <person name="Rieger M."/>
            <person name="Rivolta C."/>
            <person name="Rocha E."/>
            <person name="Roche B."/>
            <person name="Rose M."/>
            <person name="Sadaie Y."/>
            <person name="Sato T."/>
            <person name="Scanlan E."/>
            <person name="Schleich S."/>
            <person name="Schroeter R."/>
            <person name="Scoffone F."/>
            <person name="Sekiguchi J."/>
            <person name="Sekowska A."/>
            <person name="Seror S.J."/>
            <person name="Serror P."/>
            <person name="Shin B.-S."/>
            <person name="Soldo B."/>
            <person name="Sorokin A."/>
            <person name="Tacconi E."/>
            <person name="Takagi T."/>
            <person name="Takahashi H."/>
            <person name="Takemaru K."/>
            <person name="Takeuchi M."/>
            <person name="Tamakoshi A."/>
            <person name="Tanaka T."/>
            <person name="Terpstra P."/>
            <person name="Tognoni A."/>
            <person name="Tosato V."/>
            <person name="Uchiyama S."/>
            <person name="Vandenbol M."/>
            <person name="Vannier F."/>
            <person name="Vassarotti A."/>
            <person name="Viari A."/>
            <person name="Wambutt R."/>
            <person name="Wedler E."/>
            <person name="Wedler H."/>
            <person name="Weitzenegger T."/>
            <person name="Winters P."/>
            <person name="Wipat A."/>
            <person name="Yamamoto H."/>
            <person name="Yamane K."/>
            <person name="Yasumoto K."/>
            <person name="Yata K."/>
            <person name="Yoshida K."/>
            <person name="Yoshikawa H.-F."/>
            <person name="Zumstein E."/>
            <person name="Yoshikawa H."/>
            <person name="Danchin A."/>
        </authorList>
    </citation>
    <scope>NUCLEOTIDE SEQUENCE [LARGE SCALE GENOMIC DNA]</scope>
    <source>
        <strain>168</strain>
    </source>
</reference>
<reference key="3">
    <citation type="journal article" date="2009" name="Nucleic Acids Res.">
        <title>The universal YrdC/Sua5 family is required for the formation of threonylcarbamoyladenosine in tRNA.</title>
        <authorList>
            <person name="El Yacoubi B."/>
            <person name="Lyons B."/>
            <person name="Cruz Y."/>
            <person name="Reddy R."/>
            <person name="Nordin B."/>
            <person name="Agnelli F."/>
            <person name="Williamson J.R."/>
            <person name="Schimmel P."/>
            <person name="Swairjo M.A."/>
            <person name="de Crecy-Lagard V."/>
        </authorList>
    </citation>
    <scope>COMPLEMENTATION OF YEAST MUTANTS</scope>
    <source>
        <strain>168</strain>
    </source>
</reference>
<reference key="4">
    <citation type="journal article" date="2012" name="Biochemistry">
        <title>Mechanism of N6-threonylcarbamoyladenosine (t(6)A) biosynthesis: isolation and characterization of the intermediate threonylcarbamoyl-AMP.</title>
        <authorList>
            <person name="Lauhon C.T."/>
        </authorList>
    </citation>
    <scope>FUNCTION AS A TC-AMP SYNTHASE</scope>
    <scope>CATALYTIC ACTIVITY</scope>
    <source>
        <strain>168</strain>
    </source>
</reference>
<gene>
    <name type="primary">ywlC</name>
    <name type="ordered locus">BSU36950</name>
    <name type="ORF">ipc-29d</name>
</gene>
<feature type="chain" id="PRO_0000202020" description="Threonylcarbamoyl-AMP synthase">
    <location>
        <begin position="1"/>
        <end position="346"/>
    </location>
</feature>
<feature type="domain" description="YrdC-like" evidence="2">
    <location>
        <begin position="18"/>
        <end position="205"/>
    </location>
</feature>
<feature type="binding site" evidence="1">
    <location>
        <position position="40"/>
    </location>
    <ligand>
        <name>L-threonine</name>
        <dbReference type="ChEBI" id="CHEBI:57926"/>
    </ligand>
</feature>
<feature type="binding site" evidence="1">
    <location>
        <position position="63"/>
    </location>
    <ligand>
        <name>ATP</name>
        <dbReference type="ChEBI" id="CHEBI:30616"/>
    </ligand>
</feature>
<feature type="binding site" evidence="1">
    <location>
        <position position="67"/>
    </location>
    <ligand>
        <name>ATP</name>
        <dbReference type="ChEBI" id="CHEBI:30616"/>
    </ligand>
</feature>
<feature type="binding site" evidence="1">
    <location>
        <position position="72"/>
    </location>
    <ligand>
        <name>L-threonine</name>
        <dbReference type="ChEBI" id="CHEBI:57926"/>
    </ligand>
</feature>
<feature type="binding site" evidence="1">
    <location>
        <position position="123"/>
    </location>
    <ligand>
        <name>ATP</name>
        <dbReference type="ChEBI" id="CHEBI:30616"/>
    </ligand>
</feature>
<feature type="binding site" evidence="1">
    <location>
        <position position="127"/>
    </location>
    <ligand>
        <name>L-threonine</name>
        <dbReference type="ChEBI" id="CHEBI:57926"/>
    </ligand>
</feature>
<feature type="binding site" evidence="1">
    <location>
        <position position="147"/>
    </location>
    <ligand>
        <name>L-threonine</name>
        <dbReference type="ChEBI" id="CHEBI:57926"/>
    </ligand>
</feature>
<feature type="binding site" evidence="1">
    <location>
        <position position="149"/>
    </location>
    <ligand>
        <name>ATP</name>
        <dbReference type="ChEBI" id="CHEBI:30616"/>
    </ligand>
</feature>
<feature type="binding site" evidence="1">
    <location>
        <position position="157"/>
    </location>
    <ligand>
        <name>ATP</name>
        <dbReference type="ChEBI" id="CHEBI:30616"/>
    </ligand>
</feature>
<feature type="binding site" evidence="1">
    <location>
        <position position="187"/>
    </location>
    <ligand>
        <name>L-threonine</name>
        <dbReference type="ChEBI" id="CHEBI:57926"/>
    </ligand>
</feature>
<feature type="binding site" evidence="1">
    <location>
        <position position="201"/>
    </location>
    <ligand>
        <name>ATP</name>
        <dbReference type="ChEBI" id="CHEBI:30616"/>
    </ligand>
</feature>
<feature type="binding site" evidence="1">
    <location>
        <position position="240"/>
    </location>
    <ligand>
        <name>ATP</name>
        <dbReference type="ChEBI" id="CHEBI:30616"/>
    </ligand>
</feature>
<comment type="function">
    <text evidence="3">Required for the formation of a threonylcarbamoyl group on adenosine at position 37 (t(6)A37) in tRNAs that read codons beginning with adenine. Catalyzes the conversion of L-threonine, HCO(3)(-)/CO(2) and ATP to give threonylcarbamoyl-AMP (TC-AMP) as the acyladenylate intermediate, with the release of diphosphate. Is also able to catalyze the reverse reaction in vitro, i.e. the formation of ATP from TC-AMP and PPi.</text>
</comment>
<comment type="catalytic activity">
    <reaction evidence="3">
        <text>L-threonine + hydrogencarbonate + ATP = L-threonylcarbamoyladenylate + diphosphate + H2O</text>
        <dbReference type="Rhea" id="RHEA:36407"/>
        <dbReference type="ChEBI" id="CHEBI:15377"/>
        <dbReference type="ChEBI" id="CHEBI:17544"/>
        <dbReference type="ChEBI" id="CHEBI:30616"/>
        <dbReference type="ChEBI" id="CHEBI:33019"/>
        <dbReference type="ChEBI" id="CHEBI:57926"/>
        <dbReference type="ChEBI" id="CHEBI:73682"/>
        <dbReference type="EC" id="2.7.7.87"/>
    </reaction>
</comment>
<comment type="subcellular location">
    <subcellularLocation>
        <location evidence="4">Cytoplasm</location>
    </subcellularLocation>
</comment>
<comment type="miscellaneous">
    <text>Complements a S.cerevisiae SUA5 disruption mutant.</text>
</comment>
<comment type="miscellaneous">
    <text evidence="5">The four proteins YwlC, TsaD, TsaB and TsaE are necessary and sufficient for tRNA(NNU) t(6)A37 threonylcarbamoyladenosine biosynthesis in vitro in B.subtilis.</text>
</comment>
<comment type="miscellaneous">
    <text evidence="5">Unlike previously thought, the formation of TC-AMP does not proceed via an ATP-activated HCO(3)(-) intermediate such as carboxy-AMP.</text>
</comment>
<comment type="similarity">
    <text evidence="4">Belongs to the SUA5 family.</text>
</comment>
<comment type="caution">
    <text evidence="4">The well-known t(6)A modification appears to be a hydrolyzed artifact of natural cyclic t(6)A (ct(6)A) that occurs during the preparation and handling of tRNA in B.subtilis and many other species (PubMed:23242255). In these species, the t(6)A modification is processed further by dehydration into ct(6)A, a reaction catalyzed by TcdA.</text>
</comment>
<protein>
    <recommendedName>
        <fullName>Threonylcarbamoyl-AMP synthase</fullName>
        <shortName>TC-AMP synthase</shortName>
        <ecNumber>2.7.7.87</ecNumber>
    </recommendedName>
    <alternativeName>
        <fullName>L-threonylcarbamoyladenylate synthase</fullName>
    </alternativeName>
    <alternativeName>
        <fullName>t(6)A37 threonylcarbamoyladenosine biosynthesis protein YwlC</fullName>
    </alternativeName>
    <alternativeName>
        <fullName>tRNA threonylcarbamoyladenosine biosynthesis protein YwlC</fullName>
    </alternativeName>
</protein>